<keyword id="KW-0002">3D-structure</keyword>
<keyword id="KW-1015">Disulfide bond</keyword>
<keyword id="KW-0325">Glycoprotein</keyword>
<keyword id="KW-0326">Glycosidase</keyword>
<keyword id="KW-0378">Hydrolase</keyword>
<keyword id="KW-0442">Lipid degradation</keyword>
<keyword id="KW-0443">Lipid metabolism</keyword>
<keyword id="KW-0458">Lysosome</keyword>
<keyword id="KW-1185">Reference proteome</keyword>
<keyword id="KW-0732">Signal</keyword>
<keyword id="KW-0746">Sphingolipid metabolism</keyword>
<sequence>MANSQPKASQQRQAKVMTAAAGSASRVAVPLLLCALLVPGGAYVLDDSDGLGREFDGIGAVSGGGATSRLLVNYPEPYRSEILDYLFKPNFGASLHILKVEIGGDGQTTDGTEPSHMHYELDENYFRGYEWWLMKEAKKRNPDIILMGLPWSFPGWLGKGFSWPYVNLQLTAYYVVRWILGAKHYHDLDIDYIGIWNERPFDANYIKELRKMLDYQGLQRVRIIASDNLWEPISSSLLLDQELWKVVDVIGAHYPGTYTVWNAKMSGKKLWSSEDFSTINSNVGAGCWSRILNQNYINGNMTSTIAWNLVASYYEELPYGRSGLMTAQEPWSGHYVVASPIWVSAHTTQFTQPGWYYLKTVGHLEKGGSYVALTDGLGNLTIIIETMSHQHSMCIRPYLPYYNVSHQLATFTLKGSLREIQELQVWYTKLGTPQQRLHFKQLDTLWLLDGSGSFTLELEEDEIFTLTTLTTGRKGSYPPPPSSKPFPTNYKDDFNVEYPLFSEAPNFADQTGVFEYYMNNEDREHRFTLRQVLNQRPITWAADASSTISVIGDHHWTNMTVQCDVYIETPRSGGVFIAGRVNKGGILIRSATGVFFWIFANGSYRVTADLGGWITYASGHADVTAKRWYTLTLGIKGYFAFGMLNGTILWKNVRVKYPGHGWAAIGTHTFEFAQFDNFRVEAAR</sequence>
<organism>
    <name type="scientific">Mus musculus</name>
    <name type="common">Mouse</name>
    <dbReference type="NCBI Taxonomy" id="10090"/>
    <lineage>
        <taxon>Eukaryota</taxon>
        <taxon>Metazoa</taxon>
        <taxon>Chordata</taxon>
        <taxon>Craniata</taxon>
        <taxon>Vertebrata</taxon>
        <taxon>Euteleostomi</taxon>
        <taxon>Mammalia</taxon>
        <taxon>Eutheria</taxon>
        <taxon>Euarchontoglires</taxon>
        <taxon>Glires</taxon>
        <taxon>Rodentia</taxon>
        <taxon>Myomorpha</taxon>
        <taxon>Muroidea</taxon>
        <taxon>Muridae</taxon>
        <taxon>Murinae</taxon>
        <taxon>Mus</taxon>
        <taxon>Mus</taxon>
    </lineage>
</organism>
<comment type="function">
    <text evidence="2 4 6">Hydrolyzes the galactose ester bonds of glycolipids such as galactosylceramide and galactosylsphingosine (PubMed:10861297, PubMed:8769874). Enzyme with very low activity responsible for the lysosomal catabolism of galactosylceramide, a major lipid in myelin, kidney and epithelial cells of small intestine and colon (By similarity).</text>
</comment>
<comment type="catalytic activity">
    <reaction evidence="6">
        <text>a beta-D-galactosyl-(1&lt;-&gt;1')-N-acylsphing-4-enine + H2O = an N-acylsphing-4-enine + D-galactose</text>
        <dbReference type="Rhea" id="RHEA:14297"/>
        <dbReference type="ChEBI" id="CHEBI:4139"/>
        <dbReference type="ChEBI" id="CHEBI:15377"/>
        <dbReference type="ChEBI" id="CHEBI:18390"/>
        <dbReference type="ChEBI" id="CHEBI:52639"/>
        <dbReference type="EC" id="3.2.1.46"/>
    </reaction>
    <physiologicalReaction direction="left-to-right" evidence="9">
        <dbReference type="Rhea" id="RHEA:14298"/>
    </physiologicalReaction>
</comment>
<comment type="catalytic activity">
    <reaction evidence="4">
        <text>a D-galactosylceramide + H2O = an N-acyl-sphingoid base + D-galactose</text>
        <dbReference type="Rhea" id="RHEA:43412"/>
        <dbReference type="ChEBI" id="CHEBI:4139"/>
        <dbReference type="ChEBI" id="CHEBI:15377"/>
        <dbReference type="ChEBI" id="CHEBI:36498"/>
        <dbReference type="ChEBI" id="CHEBI:83273"/>
    </reaction>
    <physiologicalReaction direction="left-to-right" evidence="8">
        <dbReference type="Rhea" id="RHEA:43413"/>
    </physiologicalReaction>
</comment>
<comment type="catalytic activity">
    <reaction evidence="2">
        <text>beta-D-galactosyl-(1&lt;-&gt;1)-sphing-4-enine + H2O = sphing-4-enine + D-galactose</text>
        <dbReference type="Rhea" id="RHEA:43908"/>
        <dbReference type="ChEBI" id="CHEBI:4139"/>
        <dbReference type="ChEBI" id="CHEBI:15377"/>
        <dbReference type="ChEBI" id="CHEBI:57756"/>
        <dbReference type="ChEBI" id="CHEBI:57934"/>
    </reaction>
    <physiologicalReaction direction="left-to-right" evidence="2">
        <dbReference type="Rhea" id="RHEA:43909"/>
    </physiologicalReaction>
</comment>
<comment type="subcellular location">
    <subcellularLocation>
        <location evidence="1">Lysosome</location>
    </subcellularLocation>
</comment>
<comment type="tissue specificity">
    <text evidence="6">Detected in brain and kidney.</text>
</comment>
<comment type="disease">
    <text>Defects in Galc are the cause of the 'twitcher' phenotype; an autosomal recessive leukodystrophy similar to the human disease (Krabbe disease). This deficiency results in the insufficient catabolism of several galactolipids that are important in the production of normal myelin.</text>
</comment>
<comment type="similarity">
    <text evidence="7">Belongs to the glycosyl hydrolase 59 family.</text>
</comment>
<comment type="caution">
    <text evidence="7">It is uncertain whether Met-1 or Met-17 is the initiator.</text>
</comment>
<comment type="sequence caution" evidence="7">
    <conflict type="erroneous initiation">
        <sequence resource="EMBL-CDS" id="AAB71823"/>
    </conflict>
</comment>
<comment type="sequence caution" evidence="7">
    <conflict type="erroneous initiation">
        <sequence resource="EMBL-CDS" id="AAH86671"/>
    </conflict>
</comment>
<comment type="sequence caution" evidence="7">
    <conflict type="erroneous initiation">
        <sequence resource="EMBL-CDS" id="BAA07560"/>
    </conflict>
</comment>
<proteinExistence type="evidence at protein level"/>
<accession>P54818</accession>
<accession>O35151</accession>
<accession>Q3U3H7</accession>
<feature type="signal peptide" evidence="1">
    <location>
        <begin position="1"/>
        <end position="42"/>
    </location>
</feature>
<feature type="chain" id="PRO_0000012232" description="Galactocerebrosidase">
    <location>
        <begin position="43"/>
        <end position="684"/>
    </location>
</feature>
<feature type="active site" description="Proton donor/acceptor" evidence="5">
    <location>
        <position position="198"/>
    </location>
</feature>
<feature type="active site" description="Nucleophile" evidence="5">
    <location>
        <position position="274"/>
    </location>
</feature>
<feature type="binding site">
    <location>
        <position position="109"/>
    </location>
    <ligand>
        <name>substrate</name>
    </ligand>
</feature>
<feature type="binding site">
    <location>
        <position position="151"/>
    </location>
    <ligand>
        <name>substrate</name>
    </ligand>
</feature>
<feature type="binding site">
    <location>
        <position position="197"/>
    </location>
    <ligand>
        <name>substrate</name>
    </ligand>
</feature>
<feature type="binding site">
    <location>
        <position position="396"/>
    </location>
    <ligand>
        <name>substrate</name>
    </ligand>
</feature>
<feature type="glycosylation site" description="N-linked (GlcNAc...) asparagine" evidence="5">
    <location>
        <position position="300"/>
    </location>
</feature>
<feature type="glycosylation site" description="N-linked (GlcNAc...) asparagine" evidence="5">
    <location>
        <position position="379"/>
    </location>
</feature>
<feature type="glycosylation site" description="N-linked (GlcNAc...) asparagine" evidence="5">
    <location>
        <position position="403"/>
    </location>
</feature>
<feature type="glycosylation site" description="N-linked (GlcNAc...) asparagine" evidence="5">
    <location>
        <position position="558"/>
    </location>
</feature>
<feature type="glycosylation site" description="N-linked (GlcNAc...) asparagine" evidence="3">
    <location>
        <position position="601"/>
    </location>
</feature>
<feature type="glycosylation site" description="N-linked (GlcNAc...) asparagine" evidence="3">
    <location>
        <position position="645"/>
    </location>
</feature>
<feature type="disulfide bond" evidence="5">
    <location>
        <begin position="287"/>
        <end position="394"/>
    </location>
</feature>
<feature type="sequence conflict" description="In Ref. 2; AAB71823." evidence="7" ref="2">
    <original>G</original>
    <variation>A</variation>
    <location>
        <position position="376"/>
    </location>
</feature>
<feature type="strand" evidence="12">
    <location>
        <begin position="42"/>
        <end position="45"/>
    </location>
</feature>
<feature type="strand" evidence="12">
    <location>
        <begin position="51"/>
        <end position="54"/>
    </location>
</feature>
<feature type="strand" evidence="12">
    <location>
        <begin position="57"/>
        <end position="62"/>
    </location>
</feature>
<feature type="turn" evidence="12">
    <location>
        <begin position="67"/>
        <end position="73"/>
    </location>
</feature>
<feature type="helix" evidence="12">
    <location>
        <begin position="78"/>
        <end position="87"/>
    </location>
</feature>
<feature type="turn" evidence="12">
    <location>
        <begin position="89"/>
        <end position="91"/>
    </location>
</feature>
<feature type="strand" evidence="12">
    <location>
        <begin position="96"/>
        <end position="102"/>
    </location>
</feature>
<feature type="strand" evidence="12">
    <location>
        <begin position="105"/>
        <end position="107"/>
    </location>
</feature>
<feature type="strand" evidence="12">
    <location>
        <begin position="109"/>
        <end position="112"/>
    </location>
</feature>
<feature type="strand" evidence="12">
    <location>
        <begin position="127"/>
        <end position="129"/>
    </location>
</feature>
<feature type="helix" evidence="12">
    <location>
        <begin position="130"/>
        <end position="140"/>
    </location>
</feature>
<feature type="strand" evidence="12">
    <location>
        <begin position="145"/>
        <end position="151"/>
    </location>
</feature>
<feature type="helix" evidence="12">
    <location>
        <begin position="155"/>
        <end position="158"/>
    </location>
</feature>
<feature type="helix" evidence="12">
    <location>
        <begin position="168"/>
        <end position="186"/>
    </location>
</feature>
<feature type="helix" evidence="12">
    <location>
        <begin position="203"/>
        <end position="215"/>
    </location>
</feature>
<feature type="strand" evidence="12">
    <location>
        <begin position="222"/>
        <end position="228"/>
    </location>
</feature>
<feature type="helix" evidence="12">
    <location>
        <begin position="233"/>
        <end position="239"/>
    </location>
</feature>
<feature type="helix" evidence="12">
    <location>
        <begin position="241"/>
        <end position="246"/>
    </location>
</feature>
<feature type="strand" evidence="12">
    <location>
        <begin position="249"/>
        <end position="254"/>
    </location>
</feature>
<feature type="helix" evidence="12">
    <location>
        <begin position="261"/>
        <end position="266"/>
    </location>
</feature>
<feature type="strand" evidence="12">
    <location>
        <begin position="269"/>
        <end position="276"/>
    </location>
</feature>
<feature type="helix" evidence="12">
    <location>
        <begin position="282"/>
        <end position="299"/>
    </location>
</feature>
<feature type="strand" evidence="12">
    <location>
        <begin position="303"/>
        <end position="307"/>
    </location>
</feature>
<feature type="strand" evidence="11">
    <location>
        <begin position="309"/>
        <end position="311"/>
    </location>
</feature>
<feature type="turn" evidence="12">
    <location>
        <begin position="318"/>
        <end position="321"/>
    </location>
</feature>
<feature type="strand" evidence="12">
    <location>
        <begin position="323"/>
        <end position="326"/>
    </location>
</feature>
<feature type="turn" evidence="12">
    <location>
        <begin position="330"/>
        <end position="332"/>
    </location>
</feature>
<feature type="helix" evidence="12">
    <location>
        <begin position="340"/>
        <end position="348"/>
    </location>
</feature>
<feature type="strand" evidence="12">
    <location>
        <begin position="356"/>
        <end position="359"/>
    </location>
</feature>
<feature type="strand" evidence="12">
    <location>
        <begin position="369"/>
        <end position="374"/>
    </location>
</feature>
<feature type="strand" evidence="12">
    <location>
        <begin position="376"/>
        <end position="378"/>
    </location>
</feature>
<feature type="strand" evidence="12">
    <location>
        <begin position="380"/>
        <end position="385"/>
    </location>
</feature>
<feature type="helix" evidence="12">
    <location>
        <begin position="389"/>
        <end position="391"/>
    </location>
</feature>
<feature type="strand" evidence="12">
    <location>
        <begin position="395"/>
        <end position="397"/>
    </location>
</feature>
<feature type="strand" evidence="12">
    <location>
        <begin position="407"/>
        <end position="413"/>
    </location>
</feature>
<feature type="helix" evidence="12">
    <location>
        <begin position="415"/>
        <end position="417"/>
    </location>
</feature>
<feature type="strand" evidence="12">
    <location>
        <begin position="422"/>
        <end position="429"/>
    </location>
</feature>
<feature type="strand" evidence="12">
    <location>
        <begin position="437"/>
        <end position="446"/>
    </location>
</feature>
<feature type="strand" evidence="12">
    <location>
        <begin position="449"/>
        <end position="451"/>
    </location>
</feature>
<feature type="strand" evidence="12">
    <location>
        <begin position="453"/>
        <end position="458"/>
    </location>
</feature>
<feature type="strand" evidence="12">
    <location>
        <begin position="460"/>
        <end position="468"/>
    </location>
</feature>
<feature type="strand" evidence="12">
    <location>
        <begin position="488"/>
        <end position="492"/>
    </location>
</feature>
<feature type="strand" evidence="12">
    <location>
        <begin position="500"/>
        <end position="503"/>
    </location>
</feature>
<feature type="strand" evidence="12">
    <location>
        <begin position="508"/>
        <end position="512"/>
    </location>
</feature>
<feature type="strand" evidence="12">
    <location>
        <begin position="514"/>
        <end position="518"/>
    </location>
</feature>
<feature type="strand" evidence="12">
    <location>
        <begin position="526"/>
        <end position="531"/>
    </location>
</feature>
<feature type="strand" evidence="12">
    <location>
        <begin position="545"/>
        <end position="552"/>
    </location>
</feature>
<feature type="strand" evidence="12">
    <location>
        <begin position="558"/>
        <end position="567"/>
    </location>
</feature>
<feature type="turn" evidence="12">
    <location>
        <begin position="570"/>
        <end position="572"/>
    </location>
</feature>
<feature type="strand" evidence="12">
    <location>
        <begin position="574"/>
        <end position="581"/>
    </location>
</feature>
<feature type="helix" evidence="12">
    <location>
        <begin position="585"/>
        <end position="590"/>
    </location>
</feature>
<feature type="strand" evidence="12">
    <location>
        <begin position="592"/>
        <end position="599"/>
    </location>
</feature>
<feature type="turn" evidence="12">
    <location>
        <begin position="600"/>
        <end position="602"/>
    </location>
</feature>
<feature type="strand" evidence="12">
    <location>
        <begin position="603"/>
        <end position="609"/>
    </location>
</feature>
<feature type="strand" evidence="12">
    <location>
        <begin position="614"/>
        <end position="620"/>
    </location>
</feature>
<feature type="strand" evidence="12">
    <location>
        <begin position="628"/>
        <end position="636"/>
    </location>
</feature>
<feature type="strand" evidence="12">
    <location>
        <begin position="639"/>
        <end position="644"/>
    </location>
</feature>
<feature type="strand" evidence="12">
    <location>
        <begin position="647"/>
        <end position="654"/>
    </location>
</feature>
<feature type="strand" evidence="12">
    <location>
        <begin position="662"/>
        <end position="670"/>
    </location>
</feature>
<feature type="strand" evidence="12">
    <location>
        <begin position="673"/>
        <end position="683"/>
    </location>
</feature>
<gene>
    <name evidence="10" type="primary">Galc</name>
</gene>
<evidence type="ECO:0000250" key="1"/>
<evidence type="ECO:0000250" key="2">
    <source>
        <dbReference type="UniProtKB" id="P54803"/>
    </source>
</evidence>
<evidence type="ECO:0000255" key="3"/>
<evidence type="ECO:0000269" key="4">
    <source>
    </source>
</evidence>
<evidence type="ECO:0000269" key="5">
    <source>
    </source>
</evidence>
<evidence type="ECO:0000269" key="6">
    <source>
    </source>
</evidence>
<evidence type="ECO:0000305" key="7"/>
<evidence type="ECO:0000305" key="8">
    <source>
    </source>
</evidence>
<evidence type="ECO:0000305" key="9">
    <source>
    </source>
</evidence>
<evidence type="ECO:0000312" key="10">
    <source>
        <dbReference type="MGI" id="MGI:95636"/>
    </source>
</evidence>
<evidence type="ECO:0007829" key="11">
    <source>
        <dbReference type="PDB" id="4CCC"/>
    </source>
</evidence>
<evidence type="ECO:0007829" key="12">
    <source>
        <dbReference type="PDB" id="4CCD"/>
    </source>
</evidence>
<protein>
    <recommendedName>
        <fullName evidence="7">Galactocerebrosidase</fullName>
        <shortName>GALCERase</shortName>
        <ecNumber evidence="6">3.2.1.46</ecNumber>
    </recommendedName>
    <alternativeName>
        <fullName>Galactocerebroside beta-galactosidase</fullName>
    </alternativeName>
    <alternativeName>
        <fullName evidence="2">Galactosylceramidase</fullName>
    </alternativeName>
    <alternativeName>
        <fullName>Galactosylceramide beta-galactosidase</fullName>
    </alternativeName>
</protein>
<dbReference type="EC" id="3.2.1.46" evidence="6"/>
<dbReference type="EMBL" id="D38557">
    <property type="protein sequence ID" value="BAA07560.1"/>
    <property type="status" value="ALT_INIT"/>
    <property type="molecule type" value="mRNA"/>
</dbReference>
<dbReference type="EMBL" id="AF003886">
    <property type="protein sequence ID" value="AAB71823.1"/>
    <property type="status" value="ALT_INIT"/>
    <property type="molecule type" value="Genomic_DNA"/>
</dbReference>
<dbReference type="EMBL" id="AF003870">
    <property type="protein sequence ID" value="AAB71823.1"/>
    <property type="status" value="JOINED"/>
    <property type="molecule type" value="Genomic_DNA"/>
</dbReference>
<dbReference type="EMBL" id="AF003871">
    <property type="protein sequence ID" value="AAB71823.1"/>
    <property type="status" value="JOINED"/>
    <property type="molecule type" value="Genomic_DNA"/>
</dbReference>
<dbReference type="EMBL" id="AF003872">
    <property type="protein sequence ID" value="AAB71823.1"/>
    <property type="status" value="JOINED"/>
    <property type="molecule type" value="Genomic_DNA"/>
</dbReference>
<dbReference type="EMBL" id="AF003873">
    <property type="protein sequence ID" value="AAB71823.1"/>
    <property type="status" value="JOINED"/>
    <property type="molecule type" value="Genomic_DNA"/>
</dbReference>
<dbReference type="EMBL" id="AF003874">
    <property type="protein sequence ID" value="AAB71823.1"/>
    <property type="status" value="JOINED"/>
    <property type="molecule type" value="Genomic_DNA"/>
</dbReference>
<dbReference type="EMBL" id="AF003875">
    <property type="protein sequence ID" value="AAB71823.1"/>
    <property type="status" value="JOINED"/>
    <property type="molecule type" value="Genomic_DNA"/>
</dbReference>
<dbReference type="EMBL" id="AF003876">
    <property type="protein sequence ID" value="AAB71823.1"/>
    <property type="status" value="JOINED"/>
    <property type="molecule type" value="Genomic_DNA"/>
</dbReference>
<dbReference type="EMBL" id="AF003877">
    <property type="protein sequence ID" value="AAB71823.1"/>
    <property type="status" value="JOINED"/>
    <property type="molecule type" value="Genomic_DNA"/>
</dbReference>
<dbReference type="EMBL" id="AF003878">
    <property type="protein sequence ID" value="AAB71823.1"/>
    <property type="status" value="JOINED"/>
    <property type="molecule type" value="Genomic_DNA"/>
</dbReference>
<dbReference type="EMBL" id="AF003879">
    <property type="protein sequence ID" value="AAB71823.1"/>
    <property type="status" value="JOINED"/>
    <property type="molecule type" value="Genomic_DNA"/>
</dbReference>
<dbReference type="EMBL" id="AF003880">
    <property type="protein sequence ID" value="AAB71823.1"/>
    <property type="status" value="JOINED"/>
    <property type="molecule type" value="Genomic_DNA"/>
</dbReference>
<dbReference type="EMBL" id="AF003881">
    <property type="protein sequence ID" value="AAB71823.1"/>
    <property type="status" value="JOINED"/>
    <property type="molecule type" value="Genomic_DNA"/>
</dbReference>
<dbReference type="EMBL" id="AF003882">
    <property type="protein sequence ID" value="AAB71823.1"/>
    <property type="status" value="JOINED"/>
    <property type="molecule type" value="Genomic_DNA"/>
</dbReference>
<dbReference type="EMBL" id="AF003883">
    <property type="protein sequence ID" value="AAB71823.1"/>
    <property type="status" value="JOINED"/>
    <property type="molecule type" value="Genomic_DNA"/>
</dbReference>
<dbReference type="EMBL" id="AF003884">
    <property type="protein sequence ID" value="AAB71823.1"/>
    <property type="status" value="JOINED"/>
    <property type="molecule type" value="Genomic_DNA"/>
</dbReference>
<dbReference type="EMBL" id="AF003885">
    <property type="protein sequence ID" value="AAB71823.1"/>
    <property type="status" value="JOINED"/>
    <property type="molecule type" value="Genomic_DNA"/>
</dbReference>
<dbReference type="EMBL" id="AK154760">
    <property type="protein sequence ID" value="BAE32809.1"/>
    <property type="molecule type" value="mRNA"/>
</dbReference>
<dbReference type="EMBL" id="CH466549">
    <property type="protein sequence ID" value="EDL18937.1"/>
    <property type="molecule type" value="Genomic_DNA"/>
</dbReference>
<dbReference type="EMBL" id="BC086671">
    <property type="protein sequence ID" value="AAH86671.1"/>
    <property type="status" value="ALT_INIT"/>
    <property type="molecule type" value="mRNA"/>
</dbReference>
<dbReference type="CCDS" id="CCDS36517.1"/>
<dbReference type="RefSeq" id="NP_032105.2">
    <property type="nucleotide sequence ID" value="NM_008079.4"/>
</dbReference>
<dbReference type="PDB" id="3ZR5">
    <property type="method" value="X-ray"/>
    <property type="resolution" value="2.10 A"/>
    <property type="chains" value="A=40-684"/>
</dbReference>
<dbReference type="PDB" id="3ZR6">
    <property type="method" value="X-ray"/>
    <property type="resolution" value="2.44 A"/>
    <property type="chains" value="A=40-684"/>
</dbReference>
<dbReference type="PDB" id="4CCC">
    <property type="method" value="X-ray"/>
    <property type="resolution" value="2.09 A"/>
    <property type="chains" value="A=41-684"/>
</dbReference>
<dbReference type="PDB" id="4CCD">
    <property type="method" value="X-ray"/>
    <property type="resolution" value="1.97 A"/>
    <property type="chains" value="A=41-684"/>
</dbReference>
<dbReference type="PDB" id="4CCE">
    <property type="method" value="X-ray"/>
    <property type="resolution" value="2.06 A"/>
    <property type="chains" value="A=41-684"/>
</dbReference>
<dbReference type="PDB" id="4UFH">
    <property type="method" value="X-ray"/>
    <property type="resolution" value="2.16 A"/>
    <property type="chains" value="A=41-684"/>
</dbReference>
<dbReference type="PDB" id="4UFI">
    <property type="method" value="X-ray"/>
    <property type="resolution" value="2.40 A"/>
    <property type="chains" value="A=41-684"/>
</dbReference>
<dbReference type="PDB" id="4UFJ">
    <property type="method" value="X-ray"/>
    <property type="resolution" value="2.20 A"/>
    <property type="chains" value="A=41-684"/>
</dbReference>
<dbReference type="PDB" id="4UFK">
    <property type="method" value="X-ray"/>
    <property type="resolution" value="2.40 A"/>
    <property type="chains" value="A=43-684"/>
</dbReference>
<dbReference type="PDB" id="4UFL">
    <property type="method" value="X-ray"/>
    <property type="resolution" value="2.40 A"/>
    <property type="chains" value="A=43-684"/>
</dbReference>
<dbReference type="PDB" id="4UFM">
    <property type="method" value="X-ray"/>
    <property type="resolution" value="2.40 A"/>
    <property type="chains" value="A=43-684"/>
</dbReference>
<dbReference type="PDB" id="5NXB">
    <property type="method" value="X-ray"/>
    <property type="resolution" value="3.60 A"/>
    <property type="chains" value="A/B=41-684"/>
</dbReference>
<dbReference type="PDB" id="6Y6S">
    <property type="method" value="X-ray"/>
    <property type="resolution" value="2.10 A"/>
    <property type="chains" value="A=41-684"/>
</dbReference>
<dbReference type="PDB" id="6Y6T">
    <property type="method" value="X-ray"/>
    <property type="resolution" value="2.25 A"/>
    <property type="chains" value="A=41-684"/>
</dbReference>
<dbReference type="PDBsum" id="3ZR5"/>
<dbReference type="PDBsum" id="3ZR6"/>
<dbReference type="PDBsum" id="4CCC"/>
<dbReference type="PDBsum" id="4CCD"/>
<dbReference type="PDBsum" id="4CCE"/>
<dbReference type="PDBsum" id="4UFH"/>
<dbReference type="PDBsum" id="4UFI"/>
<dbReference type="PDBsum" id="4UFJ"/>
<dbReference type="PDBsum" id="4UFK"/>
<dbReference type="PDBsum" id="4UFL"/>
<dbReference type="PDBsum" id="4UFM"/>
<dbReference type="PDBsum" id="5NXB"/>
<dbReference type="PDBsum" id="6Y6S"/>
<dbReference type="PDBsum" id="6Y6T"/>
<dbReference type="SMR" id="P54818"/>
<dbReference type="BioGRID" id="199817">
    <property type="interactions" value="2"/>
</dbReference>
<dbReference type="FunCoup" id="P54818">
    <property type="interactions" value="1225"/>
</dbReference>
<dbReference type="STRING" id="10090.ENSMUSP00000021390"/>
<dbReference type="BindingDB" id="P54818"/>
<dbReference type="ChEMBL" id="CHEMBL2218"/>
<dbReference type="SwissLipids" id="SLP:000001418"/>
<dbReference type="CAZy" id="GH59">
    <property type="family name" value="Glycoside Hydrolase Family 59"/>
</dbReference>
<dbReference type="GlyCosmos" id="P54818">
    <property type="glycosylation" value="6 sites, No reported glycans"/>
</dbReference>
<dbReference type="GlyGen" id="P54818">
    <property type="glycosylation" value="6 sites, 1 N-linked glycan (1 site)"/>
</dbReference>
<dbReference type="iPTMnet" id="P54818"/>
<dbReference type="PhosphoSitePlus" id="P54818"/>
<dbReference type="jPOST" id="P54818"/>
<dbReference type="PaxDb" id="10090-ENSMUSP00000021390"/>
<dbReference type="PeptideAtlas" id="P54818"/>
<dbReference type="ProteomicsDB" id="267416"/>
<dbReference type="Antibodypedia" id="26266">
    <property type="antibodies" value="225 antibodies from 28 providers"/>
</dbReference>
<dbReference type="DNASU" id="14420"/>
<dbReference type="Ensembl" id="ENSMUST00000021390.9">
    <property type="protein sequence ID" value="ENSMUSP00000021390.8"/>
    <property type="gene ID" value="ENSMUSG00000021003.11"/>
</dbReference>
<dbReference type="GeneID" id="14420"/>
<dbReference type="KEGG" id="mmu:14420"/>
<dbReference type="UCSC" id="uc007olf.2">
    <property type="organism name" value="mouse"/>
</dbReference>
<dbReference type="AGR" id="MGI:95636"/>
<dbReference type="CTD" id="2581"/>
<dbReference type="MGI" id="MGI:95636">
    <property type="gene designation" value="Galc"/>
</dbReference>
<dbReference type="VEuPathDB" id="HostDB:ENSMUSG00000021003"/>
<dbReference type="eggNOG" id="ENOG502QQ1Q">
    <property type="taxonomic scope" value="Eukaryota"/>
</dbReference>
<dbReference type="GeneTree" id="ENSGT00390000003303"/>
<dbReference type="HOGENOM" id="CLU_015456_2_0_1"/>
<dbReference type="InParanoid" id="P54818"/>
<dbReference type="OMA" id="KYPKNGW"/>
<dbReference type="OrthoDB" id="440760at2759"/>
<dbReference type="PhylomeDB" id="P54818"/>
<dbReference type="TreeFam" id="TF312985"/>
<dbReference type="BRENDA" id="3.2.1.46">
    <property type="organism ID" value="3474"/>
</dbReference>
<dbReference type="Reactome" id="R-MMU-9840310">
    <property type="pathway name" value="Glycosphingolipid catabolism"/>
</dbReference>
<dbReference type="BioGRID-ORCS" id="14420">
    <property type="hits" value="3 hits in 78 CRISPR screens"/>
</dbReference>
<dbReference type="ChiTaRS" id="Galc">
    <property type="organism name" value="mouse"/>
</dbReference>
<dbReference type="EvolutionaryTrace" id="P54818"/>
<dbReference type="PRO" id="PR:P54818"/>
<dbReference type="Proteomes" id="UP000000589">
    <property type="component" value="Chromosome 12"/>
</dbReference>
<dbReference type="RNAct" id="P54818">
    <property type="molecule type" value="protein"/>
</dbReference>
<dbReference type="Bgee" id="ENSMUSG00000021003">
    <property type="expression patterns" value="Expressed in stroma of bone marrow and 229 other cell types or tissues"/>
</dbReference>
<dbReference type="ExpressionAtlas" id="P54818">
    <property type="expression patterns" value="baseline and differential"/>
</dbReference>
<dbReference type="GO" id="GO:0005764">
    <property type="term" value="C:lysosome"/>
    <property type="evidence" value="ECO:0000304"/>
    <property type="project" value="MGI"/>
</dbReference>
<dbReference type="GO" id="GO:0016020">
    <property type="term" value="C:membrane"/>
    <property type="evidence" value="ECO:0007669"/>
    <property type="project" value="GOC"/>
</dbReference>
<dbReference type="GO" id="GO:0005739">
    <property type="term" value="C:mitochondrion"/>
    <property type="evidence" value="ECO:0007005"/>
    <property type="project" value="MGI"/>
</dbReference>
<dbReference type="GO" id="GO:0004336">
    <property type="term" value="F:galactosylceramidase activity"/>
    <property type="evidence" value="ECO:0000314"/>
    <property type="project" value="UniProtKB"/>
</dbReference>
<dbReference type="GO" id="GO:0006683">
    <property type="term" value="P:galactosylceramide catabolic process"/>
    <property type="evidence" value="ECO:0000314"/>
    <property type="project" value="MGI"/>
</dbReference>
<dbReference type="GO" id="GO:0042552">
    <property type="term" value="P:myelination"/>
    <property type="evidence" value="ECO:0000315"/>
    <property type="project" value="MGI"/>
</dbReference>
<dbReference type="FunFam" id="2.60.120.560:FF:000001">
    <property type="entry name" value="galactocerebrosidase precursor"/>
    <property type="match status" value="1"/>
</dbReference>
<dbReference type="FunFam" id="3.20.20.70:FF:000091">
    <property type="entry name" value="galactocerebrosidase precursor"/>
    <property type="match status" value="1"/>
</dbReference>
<dbReference type="FunFam" id="3.20.20.80:FF:000026">
    <property type="entry name" value="galactocerebrosidase precursor"/>
    <property type="match status" value="1"/>
</dbReference>
<dbReference type="Gene3D" id="3.20.20.70">
    <property type="entry name" value="Aldolase class I"/>
    <property type="match status" value="1"/>
</dbReference>
<dbReference type="Gene3D" id="2.60.120.560">
    <property type="entry name" value="Exo-inulinase, domain 1"/>
    <property type="match status" value="1"/>
</dbReference>
<dbReference type="Gene3D" id="3.20.20.80">
    <property type="entry name" value="Glycosidases"/>
    <property type="match status" value="1"/>
</dbReference>
<dbReference type="InterPro" id="IPR013785">
    <property type="entry name" value="Aldolase_TIM"/>
</dbReference>
<dbReference type="InterPro" id="IPR049162">
    <property type="entry name" value="GH59_C"/>
</dbReference>
<dbReference type="InterPro" id="IPR049161">
    <property type="entry name" value="GH59_cat"/>
</dbReference>
<dbReference type="InterPro" id="IPR001286">
    <property type="entry name" value="Glyco_hydro_59"/>
</dbReference>
<dbReference type="InterPro" id="IPR035394">
    <property type="entry name" value="Glyco_hydro_59_dom"/>
</dbReference>
<dbReference type="InterPro" id="IPR017853">
    <property type="entry name" value="Glycoside_hydrolase_SF"/>
</dbReference>
<dbReference type="PANTHER" id="PTHR15172">
    <property type="entry name" value="GALACTOCEREBROSIDASE"/>
    <property type="match status" value="1"/>
</dbReference>
<dbReference type="PANTHER" id="PTHR15172:SF1">
    <property type="entry name" value="GALACTOCEREBROSIDASE"/>
    <property type="match status" value="1"/>
</dbReference>
<dbReference type="Pfam" id="PF02057">
    <property type="entry name" value="Glyco_hydro_59"/>
    <property type="match status" value="1"/>
</dbReference>
<dbReference type="Pfam" id="PF21708">
    <property type="entry name" value="Glyco_hydro_59_C"/>
    <property type="match status" value="1"/>
</dbReference>
<dbReference type="Pfam" id="PF17387">
    <property type="entry name" value="Glyco_hydro_59M"/>
    <property type="match status" value="1"/>
</dbReference>
<dbReference type="PRINTS" id="PR00850">
    <property type="entry name" value="GLHYDRLASE59"/>
</dbReference>
<dbReference type="SUPFAM" id="SSF51445">
    <property type="entry name" value="(Trans)glycosidases"/>
    <property type="match status" value="1"/>
</dbReference>
<name>GALC_MOUSE</name>
<reference key="1">
    <citation type="journal article" date="1996" name="J. Neurochem.">
        <title>Molecular cloning and expression of cDNA for murine galactocerebrosidase and mutation analysis of the twitcher mouse, a model of Krabbe's disease.</title>
        <authorList>
            <person name="Sakai N."/>
            <person name="Inui K."/>
            <person name="Tatsumi N."/>
            <person name="Fukushima H."/>
            <person name="Nishigaki T."/>
            <person name="Taniike M."/>
            <person name="Nishimoto J."/>
            <person name="Tsukamoto H."/>
            <person name="Yanagihara I."/>
            <person name="Ozono K."/>
            <person name="Okada S."/>
        </authorList>
    </citation>
    <scope>NUCLEOTIDE SEQUENCE [MRNA]</scope>
    <scope>FUNCTION</scope>
    <scope>CATALYTIC ACTIVITY</scope>
    <scope>TISSUE SPECIFICITY</scope>
    <scope>ROLE IN DISEASE</scope>
    <source>
        <strain>C57BL/6J</strain>
        <tissue>Testis</tissue>
    </source>
</reference>
<reference key="2">
    <citation type="submission" date="1997-05" db="EMBL/GenBank/DDBJ databases">
        <title>Genomic organization of the mouse galactocerebrosidase (GALC) gene.</title>
        <authorList>
            <person name="Luzi P."/>
            <person name="Victoria T."/>
            <person name="Wenger D.A."/>
        </authorList>
    </citation>
    <scope>NUCLEOTIDE SEQUENCE [GENOMIC DNA]</scope>
</reference>
<reference key="3">
    <citation type="journal article" date="2005" name="Science">
        <title>The transcriptional landscape of the mammalian genome.</title>
        <authorList>
            <person name="Carninci P."/>
            <person name="Kasukawa T."/>
            <person name="Katayama S."/>
            <person name="Gough J."/>
            <person name="Frith M.C."/>
            <person name="Maeda N."/>
            <person name="Oyama R."/>
            <person name="Ravasi T."/>
            <person name="Lenhard B."/>
            <person name="Wells C."/>
            <person name="Kodzius R."/>
            <person name="Shimokawa K."/>
            <person name="Bajic V.B."/>
            <person name="Brenner S.E."/>
            <person name="Batalov S."/>
            <person name="Forrest A.R."/>
            <person name="Zavolan M."/>
            <person name="Davis M.J."/>
            <person name="Wilming L.G."/>
            <person name="Aidinis V."/>
            <person name="Allen J.E."/>
            <person name="Ambesi-Impiombato A."/>
            <person name="Apweiler R."/>
            <person name="Aturaliya R.N."/>
            <person name="Bailey T.L."/>
            <person name="Bansal M."/>
            <person name="Baxter L."/>
            <person name="Beisel K.W."/>
            <person name="Bersano T."/>
            <person name="Bono H."/>
            <person name="Chalk A.M."/>
            <person name="Chiu K.P."/>
            <person name="Choudhary V."/>
            <person name="Christoffels A."/>
            <person name="Clutterbuck D.R."/>
            <person name="Crowe M.L."/>
            <person name="Dalla E."/>
            <person name="Dalrymple B.P."/>
            <person name="de Bono B."/>
            <person name="Della Gatta G."/>
            <person name="di Bernardo D."/>
            <person name="Down T."/>
            <person name="Engstrom P."/>
            <person name="Fagiolini M."/>
            <person name="Faulkner G."/>
            <person name="Fletcher C.F."/>
            <person name="Fukushima T."/>
            <person name="Furuno M."/>
            <person name="Futaki S."/>
            <person name="Gariboldi M."/>
            <person name="Georgii-Hemming P."/>
            <person name="Gingeras T.R."/>
            <person name="Gojobori T."/>
            <person name="Green R.E."/>
            <person name="Gustincich S."/>
            <person name="Harbers M."/>
            <person name="Hayashi Y."/>
            <person name="Hensch T.K."/>
            <person name="Hirokawa N."/>
            <person name="Hill D."/>
            <person name="Huminiecki L."/>
            <person name="Iacono M."/>
            <person name="Ikeo K."/>
            <person name="Iwama A."/>
            <person name="Ishikawa T."/>
            <person name="Jakt M."/>
            <person name="Kanapin A."/>
            <person name="Katoh M."/>
            <person name="Kawasawa Y."/>
            <person name="Kelso J."/>
            <person name="Kitamura H."/>
            <person name="Kitano H."/>
            <person name="Kollias G."/>
            <person name="Krishnan S.P."/>
            <person name="Kruger A."/>
            <person name="Kummerfeld S.K."/>
            <person name="Kurochkin I.V."/>
            <person name="Lareau L.F."/>
            <person name="Lazarevic D."/>
            <person name="Lipovich L."/>
            <person name="Liu J."/>
            <person name="Liuni S."/>
            <person name="McWilliam S."/>
            <person name="Madan Babu M."/>
            <person name="Madera M."/>
            <person name="Marchionni L."/>
            <person name="Matsuda H."/>
            <person name="Matsuzawa S."/>
            <person name="Miki H."/>
            <person name="Mignone F."/>
            <person name="Miyake S."/>
            <person name="Morris K."/>
            <person name="Mottagui-Tabar S."/>
            <person name="Mulder N."/>
            <person name="Nakano N."/>
            <person name="Nakauchi H."/>
            <person name="Ng P."/>
            <person name="Nilsson R."/>
            <person name="Nishiguchi S."/>
            <person name="Nishikawa S."/>
            <person name="Nori F."/>
            <person name="Ohara O."/>
            <person name="Okazaki Y."/>
            <person name="Orlando V."/>
            <person name="Pang K.C."/>
            <person name="Pavan W.J."/>
            <person name="Pavesi G."/>
            <person name="Pesole G."/>
            <person name="Petrovsky N."/>
            <person name="Piazza S."/>
            <person name="Reed J."/>
            <person name="Reid J.F."/>
            <person name="Ring B.Z."/>
            <person name="Ringwald M."/>
            <person name="Rost B."/>
            <person name="Ruan Y."/>
            <person name="Salzberg S.L."/>
            <person name="Sandelin A."/>
            <person name="Schneider C."/>
            <person name="Schoenbach C."/>
            <person name="Sekiguchi K."/>
            <person name="Semple C.A."/>
            <person name="Seno S."/>
            <person name="Sessa L."/>
            <person name="Sheng Y."/>
            <person name="Shibata Y."/>
            <person name="Shimada H."/>
            <person name="Shimada K."/>
            <person name="Silva D."/>
            <person name="Sinclair B."/>
            <person name="Sperling S."/>
            <person name="Stupka E."/>
            <person name="Sugiura K."/>
            <person name="Sultana R."/>
            <person name="Takenaka Y."/>
            <person name="Taki K."/>
            <person name="Tammoja K."/>
            <person name="Tan S.L."/>
            <person name="Tang S."/>
            <person name="Taylor M.S."/>
            <person name="Tegner J."/>
            <person name="Teichmann S.A."/>
            <person name="Ueda H.R."/>
            <person name="van Nimwegen E."/>
            <person name="Verardo R."/>
            <person name="Wei C.L."/>
            <person name="Yagi K."/>
            <person name="Yamanishi H."/>
            <person name="Zabarovsky E."/>
            <person name="Zhu S."/>
            <person name="Zimmer A."/>
            <person name="Hide W."/>
            <person name="Bult C."/>
            <person name="Grimmond S.M."/>
            <person name="Teasdale R.D."/>
            <person name="Liu E.T."/>
            <person name="Brusic V."/>
            <person name="Quackenbush J."/>
            <person name="Wahlestedt C."/>
            <person name="Mattick J.S."/>
            <person name="Hume D.A."/>
            <person name="Kai C."/>
            <person name="Sasaki D."/>
            <person name="Tomaru Y."/>
            <person name="Fukuda S."/>
            <person name="Kanamori-Katayama M."/>
            <person name="Suzuki M."/>
            <person name="Aoki J."/>
            <person name="Arakawa T."/>
            <person name="Iida J."/>
            <person name="Imamura K."/>
            <person name="Itoh M."/>
            <person name="Kato T."/>
            <person name="Kawaji H."/>
            <person name="Kawagashira N."/>
            <person name="Kawashima T."/>
            <person name="Kojima M."/>
            <person name="Kondo S."/>
            <person name="Konno H."/>
            <person name="Nakano K."/>
            <person name="Ninomiya N."/>
            <person name="Nishio T."/>
            <person name="Okada M."/>
            <person name="Plessy C."/>
            <person name="Shibata K."/>
            <person name="Shiraki T."/>
            <person name="Suzuki S."/>
            <person name="Tagami M."/>
            <person name="Waki K."/>
            <person name="Watahiki A."/>
            <person name="Okamura-Oho Y."/>
            <person name="Suzuki H."/>
            <person name="Kawai J."/>
            <person name="Hayashizaki Y."/>
        </authorList>
    </citation>
    <scope>NUCLEOTIDE SEQUENCE [LARGE SCALE MRNA]</scope>
    <source>
        <strain>NOD</strain>
    </source>
</reference>
<reference key="4">
    <citation type="submission" date="2005-09" db="EMBL/GenBank/DDBJ databases">
        <authorList>
            <person name="Mural R.J."/>
            <person name="Adams M.D."/>
            <person name="Myers E.W."/>
            <person name="Smith H.O."/>
            <person name="Venter J.C."/>
        </authorList>
    </citation>
    <scope>NUCLEOTIDE SEQUENCE [LARGE SCALE GENOMIC DNA]</scope>
</reference>
<reference key="5">
    <citation type="journal article" date="2004" name="Genome Res.">
        <title>The status, quality, and expansion of the NIH full-length cDNA project: the Mammalian Gene Collection (MGC).</title>
        <authorList>
            <consortium name="The MGC Project Team"/>
        </authorList>
    </citation>
    <scope>NUCLEOTIDE SEQUENCE [LARGE SCALE MRNA]</scope>
    <source>
        <strain>C57BL/6J</strain>
    </source>
</reference>
<reference key="6">
    <citation type="journal article" date="2000" name="Hum. Mol. Genet.">
        <title>Paradoxical influence of acid beta-galactosidase gene dosage on phenotype of the twitcher mouse (genetic galactosylceramidase deficiency).</title>
        <authorList>
            <person name="Tohyama J."/>
            <person name="Vanier M.T."/>
            <person name="Suzuki K."/>
            <person name="Ezoe T."/>
            <person name="Matsuda J."/>
            <person name="Suzuki K."/>
        </authorList>
    </citation>
    <scope>FUNCTION</scope>
    <scope>CATALYTIC ACTIVITY</scope>
</reference>
<reference key="7">
    <citation type="journal article" date="2010" name="Cell">
        <title>A tissue-specific atlas of mouse protein phosphorylation and expression.</title>
        <authorList>
            <person name="Huttlin E.L."/>
            <person name="Jedrychowski M.P."/>
            <person name="Elias J.E."/>
            <person name="Goswami T."/>
            <person name="Rad R."/>
            <person name="Beausoleil S.A."/>
            <person name="Villen J."/>
            <person name="Haas W."/>
            <person name="Sowa M.E."/>
            <person name="Gygi S.P."/>
        </authorList>
    </citation>
    <scope>IDENTIFICATION BY MASS SPECTROMETRY [LARGE SCALE ANALYSIS]</scope>
    <source>
        <tissue>Kidney</tissue>
    </source>
</reference>
<reference key="8">
    <citation type="journal article" date="2011" name="Proc. Natl. Acad. Sci. U.S.A.">
        <title>Insights into Krabbe disease from structures of galactocerebrosidase.</title>
        <authorList>
            <person name="Deane J.E."/>
            <person name="Graham S.C."/>
            <person name="Kim N.N."/>
            <person name="Stein P.E."/>
            <person name="McNair R."/>
            <person name="Cachon-Gonzalez M.B."/>
            <person name="Cox T.M."/>
            <person name="Read R.J."/>
        </authorList>
    </citation>
    <scope>X-RAY CRYSTALLOGRAPHY (2.1 ANGSTROMS) OF 40-684 IN COMPLEX WITH GALACTOSE</scope>
    <scope>ACTIVE SITE</scope>
    <scope>GLYCOSYLATION AT ASN-300; ASN-379; ASN-403 AND ASN-558</scope>
    <scope>DISULFIDE BOND</scope>
</reference>